<evidence type="ECO:0000255" key="1">
    <source>
        <dbReference type="HAMAP-Rule" id="MF_01382"/>
    </source>
</evidence>
<evidence type="ECO:0000256" key="2">
    <source>
        <dbReference type="SAM" id="MobiDB-lite"/>
    </source>
</evidence>
<organism>
    <name type="scientific">Escherichia coli O81 (strain ED1a)</name>
    <dbReference type="NCBI Taxonomy" id="585397"/>
    <lineage>
        <taxon>Bacteria</taxon>
        <taxon>Pseudomonadati</taxon>
        <taxon>Pseudomonadota</taxon>
        <taxon>Gammaproteobacteria</taxon>
        <taxon>Enterobacterales</taxon>
        <taxon>Enterobacteriaceae</taxon>
        <taxon>Escherichia</taxon>
    </lineage>
</organism>
<reference key="1">
    <citation type="journal article" date="2009" name="PLoS Genet.">
        <title>Organised genome dynamics in the Escherichia coli species results in highly diverse adaptive paths.</title>
        <authorList>
            <person name="Touchon M."/>
            <person name="Hoede C."/>
            <person name="Tenaillon O."/>
            <person name="Barbe V."/>
            <person name="Baeriswyl S."/>
            <person name="Bidet P."/>
            <person name="Bingen E."/>
            <person name="Bonacorsi S."/>
            <person name="Bouchier C."/>
            <person name="Bouvet O."/>
            <person name="Calteau A."/>
            <person name="Chiapello H."/>
            <person name="Clermont O."/>
            <person name="Cruveiller S."/>
            <person name="Danchin A."/>
            <person name="Diard M."/>
            <person name="Dossat C."/>
            <person name="Karoui M.E."/>
            <person name="Frapy E."/>
            <person name="Garry L."/>
            <person name="Ghigo J.M."/>
            <person name="Gilles A.M."/>
            <person name="Johnson J."/>
            <person name="Le Bouguenec C."/>
            <person name="Lescat M."/>
            <person name="Mangenot S."/>
            <person name="Martinez-Jehanne V."/>
            <person name="Matic I."/>
            <person name="Nassif X."/>
            <person name="Oztas S."/>
            <person name="Petit M.A."/>
            <person name="Pichon C."/>
            <person name="Rouy Z."/>
            <person name="Ruf C.S."/>
            <person name="Schneider D."/>
            <person name="Tourret J."/>
            <person name="Vacherie B."/>
            <person name="Vallenet D."/>
            <person name="Medigue C."/>
            <person name="Rocha E.P.C."/>
            <person name="Denamur E."/>
        </authorList>
    </citation>
    <scope>NUCLEOTIDE SEQUENCE [LARGE SCALE GENOMIC DNA]</scope>
    <source>
        <strain>ED1a</strain>
    </source>
</reference>
<accession>B7MNV7</accession>
<protein>
    <recommendedName>
        <fullName evidence="1">Protein translocase subunit SecA</fullName>
        <ecNumber evidence="1">7.4.2.8</ecNumber>
    </recommendedName>
</protein>
<keyword id="KW-0067">ATP-binding</keyword>
<keyword id="KW-0997">Cell inner membrane</keyword>
<keyword id="KW-1003">Cell membrane</keyword>
<keyword id="KW-0963">Cytoplasm</keyword>
<keyword id="KW-0472">Membrane</keyword>
<keyword id="KW-0479">Metal-binding</keyword>
<keyword id="KW-0547">Nucleotide-binding</keyword>
<keyword id="KW-0653">Protein transport</keyword>
<keyword id="KW-1278">Translocase</keyword>
<keyword id="KW-0811">Translocation</keyword>
<keyword id="KW-0813">Transport</keyword>
<keyword id="KW-0862">Zinc</keyword>
<proteinExistence type="inferred from homology"/>
<gene>
    <name evidence="1" type="primary">secA</name>
    <name type="ordered locus">ECED1_0099</name>
</gene>
<dbReference type="EC" id="7.4.2.8" evidence="1"/>
<dbReference type="EMBL" id="CU928162">
    <property type="protein sequence ID" value="CAR06322.1"/>
    <property type="molecule type" value="Genomic_DNA"/>
</dbReference>
<dbReference type="RefSeq" id="WP_000905780.1">
    <property type="nucleotide sequence ID" value="NC_011745.1"/>
</dbReference>
<dbReference type="SMR" id="B7MNV7"/>
<dbReference type="KEGG" id="ecq:ECED1_0099"/>
<dbReference type="HOGENOM" id="CLU_005314_3_0_6"/>
<dbReference type="Proteomes" id="UP000000748">
    <property type="component" value="Chromosome"/>
</dbReference>
<dbReference type="GO" id="GO:0031522">
    <property type="term" value="C:cell envelope Sec protein transport complex"/>
    <property type="evidence" value="ECO:0007669"/>
    <property type="project" value="TreeGrafter"/>
</dbReference>
<dbReference type="GO" id="GO:0005829">
    <property type="term" value="C:cytosol"/>
    <property type="evidence" value="ECO:0007669"/>
    <property type="project" value="TreeGrafter"/>
</dbReference>
<dbReference type="GO" id="GO:0005886">
    <property type="term" value="C:plasma membrane"/>
    <property type="evidence" value="ECO:0007669"/>
    <property type="project" value="UniProtKB-SubCell"/>
</dbReference>
<dbReference type="GO" id="GO:0005524">
    <property type="term" value="F:ATP binding"/>
    <property type="evidence" value="ECO:0007669"/>
    <property type="project" value="UniProtKB-UniRule"/>
</dbReference>
<dbReference type="GO" id="GO:0046872">
    <property type="term" value="F:metal ion binding"/>
    <property type="evidence" value="ECO:0007669"/>
    <property type="project" value="UniProtKB-KW"/>
</dbReference>
<dbReference type="GO" id="GO:0008564">
    <property type="term" value="F:protein-exporting ATPase activity"/>
    <property type="evidence" value="ECO:0007669"/>
    <property type="project" value="UniProtKB-EC"/>
</dbReference>
<dbReference type="GO" id="GO:0065002">
    <property type="term" value="P:intracellular protein transmembrane transport"/>
    <property type="evidence" value="ECO:0007669"/>
    <property type="project" value="UniProtKB-UniRule"/>
</dbReference>
<dbReference type="GO" id="GO:0017038">
    <property type="term" value="P:protein import"/>
    <property type="evidence" value="ECO:0007669"/>
    <property type="project" value="InterPro"/>
</dbReference>
<dbReference type="GO" id="GO:0006605">
    <property type="term" value="P:protein targeting"/>
    <property type="evidence" value="ECO:0007669"/>
    <property type="project" value="UniProtKB-UniRule"/>
</dbReference>
<dbReference type="GO" id="GO:0043952">
    <property type="term" value="P:protein transport by the Sec complex"/>
    <property type="evidence" value="ECO:0007669"/>
    <property type="project" value="TreeGrafter"/>
</dbReference>
<dbReference type="CDD" id="cd17928">
    <property type="entry name" value="DEXDc_SecA"/>
    <property type="match status" value="1"/>
</dbReference>
<dbReference type="CDD" id="cd18803">
    <property type="entry name" value="SF2_C_secA"/>
    <property type="match status" value="1"/>
</dbReference>
<dbReference type="FunFam" id="1.10.3060.10:FF:000001">
    <property type="entry name" value="Preprotein translocase subunit SecA"/>
    <property type="match status" value="1"/>
</dbReference>
<dbReference type="FunFam" id="3.40.50.300:FF:000081">
    <property type="entry name" value="Preprotein translocase subunit SecA"/>
    <property type="match status" value="1"/>
</dbReference>
<dbReference type="FunFam" id="3.40.50.300:FF:000113">
    <property type="entry name" value="Preprotein translocase subunit SecA"/>
    <property type="match status" value="1"/>
</dbReference>
<dbReference type="FunFam" id="3.90.1440.10:FF:000001">
    <property type="entry name" value="Preprotein translocase subunit SecA"/>
    <property type="match status" value="1"/>
</dbReference>
<dbReference type="Gene3D" id="1.10.3060.10">
    <property type="entry name" value="Helical scaffold and wing domains of SecA"/>
    <property type="match status" value="1"/>
</dbReference>
<dbReference type="Gene3D" id="3.40.50.300">
    <property type="entry name" value="P-loop containing nucleotide triphosphate hydrolases"/>
    <property type="match status" value="2"/>
</dbReference>
<dbReference type="Gene3D" id="3.90.1440.10">
    <property type="entry name" value="SecA, preprotein cross-linking domain"/>
    <property type="match status" value="1"/>
</dbReference>
<dbReference type="HAMAP" id="MF_01382">
    <property type="entry name" value="SecA"/>
    <property type="match status" value="1"/>
</dbReference>
<dbReference type="InterPro" id="IPR014001">
    <property type="entry name" value="Helicase_ATP-bd"/>
</dbReference>
<dbReference type="InterPro" id="IPR001650">
    <property type="entry name" value="Helicase_C-like"/>
</dbReference>
<dbReference type="InterPro" id="IPR027417">
    <property type="entry name" value="P-loop_NTPase"/>
</dbReference>
<dbReference type="InterPro" id="IPR004027">
    <property type="entry name" value="SEC_C_motif"/>
</dbReference>
<dbReference type="InterPro" id="IPR000185">
    <property type="entry name" value="SecA"/>
</dbReference>
<dbReference type="InterPro" id="IPR020937">
    <property type="entry name" value="SecA_CS"/>
</dbReference>
<dbReference type="InterPro" id="IPR011115">
    <property type="entry name" value="SecA_DEAD"/>
</dbReference>
<dbReference type="InterPro" id="IPR014018">
    <property type="entry name" value="SecA_motor_DEAD"/>
</dbReference>
<dbReference type="InterPro" id="IPR011130">
    <property type="entry name" value="SecA_preprotein_X-link_dom"/>
</dbReference>
<dbReference type="InterPro" id="IPR044722">
    <property type="entry name" value="SecA_SF2_C"/>
</dbReference>
<dbReference type="InterPro" id="IPR011116">
    <property type="entry name" value="SecA_Wing/Scaffold"/>
</dbReference>
<dbReference type="InterPro" id="IPR036266">
    <property type="entry name" value="SecA_Wing/Scaffold_sf"/>
</dbReference>
<dbReference type="InterPro" id="IPR036670">
    <property type="entry name" value="SecA_X-link_sf"/>
</dbReference>
<dbReference type="NCBIfam" id="NF009538">
    <property type="entry name" value="PRK12904.1"/>
    <property type="match status" value="1"/>
</dbReference>
<dbReference type="NCBIfam" id="TIGR00963">
    <property type="entry name" value="secA"/>
    <property type="match status" value="1"/>
</dbReference>
<dbReference type="PANTHER" id="PTHR30612:SF0">
    <property type="entry name" value="CHLOROPLAST PROTEIN-TRANSPORTING ATPASE"/>
    <property type="match status" value="1"/>
</dbReference>
<dbReference type="PANTHER" id="PTHR30612">
    <property type="entry name" value="SECA INNER MEMBRANE COMPONENT OF SEC PROTEIN SECRETION SYSTEM"/>
    <property type="match status" value="1"/>
</dbReference>
<dbReference type="Pfam" id="PF21090">
    <property type="entry name" value="P-loop_SecA"/>
    <property type="match status" value="1"/>
</dbReference>
<dbReference type="Pfam" id="PF02810">
    <property type="entry name" value="SEC-C"/>
    <property type="match status" value="1"/>
</dbReference>
<dbReference type="Pfam" id="PF07517">
    <property type="entry name" value="SecA_DEAD"/>
    <property type="match status" value="1"/>
</dbReference>
<dbReference type="Pfam" id="PF01043">
    <property type="entry name" value="SecA_PP_bind"/>
    <property type="match status" value="1"/>
</dbReference>
<dbReference type="Pfam" id="PF07516">
    <property type="entry name" value="SecA_SW"/>
    <property type="match status" value="1"/>
</dbReference>
<dbReference type="PRINTS" id="PR00906">
    <property type="entry name" value="SECA"/>
</dbReference>
<dbReference type="SMART" id="SM00957">
    <property type="entry name" value="SecA_DEAD"/>
    <property type="match status" value="1"/>
</dbReference>
<dbReference type="SMART" id="SM00958">
    <property type="entry name" value="SecA_PP_bind"/>
    <property type="match status" value="1"/>
</dbReference>
<dbReference type="SUPFAM" id="SSF81886">
    <property type="entry name" value="Helical scaffold and wing domains of SecA"/>
    <property type="match status" value="1"/>
</dbReference>
<dbReference type="SUPFAM" id="SSF52540">
    <property type="entry name" value="P-loop containing nucleoside triphosphate hydrolases"/>
    <property type="match status" value="2"/>
</dbReference>
<dbReference type="SUPFAM" id="SSF81767">
    <property type="entry name" value="Pre-protein crosslinking domain of SecA"/>
    <property type="match status" value="1"/>
</dbReference>
<dbReference type="PROSITE" id="PS01312">
    <property type="entry name" value="SECA"/>
    <property type="match status" value="1"/>
</dbReference>
<dbReference type="PROSITE" id="PS51196">
    <property type="entry name" value="SECA_MOTOR_DEAD"/>
    <property type="match status" value="1"/>
</dbReference>
<feature type="chain" id="PRO_1000184229" description="Protein translocase subunit SecA">
    <location>
        <begin position="1"/>
        <end position="901"/>
    </location>
</feature>
<feature type="region of interest" description="Disordered" evidence="2">
    <location>
        <begin position="859"/>
        <end position="901"/>
    </location>
</feature>
<feature type="compositionally biased region" description="Basic residues" evidence="2">
    <location>
        <begin position="891"/>
        <end position="901"/>
    </location>
</feature>
<feature type="binding site" evidence="1">
    <location>
        <position position="87"/>
    </location>
    <ligand>
        <name>ATP</name>
        <dbReference type="ChEBI" id="CHEBI:30616"/>
    </ligand>
</feature>
<feature type="binding site" evidence="1">
    <location>
        <begin position="105"/>
        <end position="109"/>
    </location>
    <ligand>
        <name>ATP</name>
        <dbReference type="ChEBI" id="CHEBI:30616"/>
    </ligand>
</feature>
<feature type="binding site" evidence="1">
    <location>
        <position position="512"/>
    </location>
    <ligand>
        <name>ATP</name>
        <dbReference type="ChEBI" id="CHEBI:30616"/>
    </ligand>
</feature>
<feature type="binding site" evidence="1">
    <location>
        <position position="885"/>
    </location>
    <ligand>
        <name>Zn(2+)</name>
        <dbReference type="ChEBI" id="CHEBI:29105"/>
    </ligand>
</feature>
<feature type="binding site" evidence="1">
    <location>
        <position position="887"/>
    </location>
    <ligand>
        <name>Zn(2+)</name>
        <dbReference type="ChEBI" id="CHEBI:29105"/>
    </ligand>
</feature>
<feature type="binding site" evidence="1">
    <location>
        <position position="896"/>
    </location>
    <ligand>
        <name>Zn(2+)</name>
        <dbReference type="ChEBI" id="CHEBI:29105"/>
    </ligand>
</feature>
<feature type="binding site" evidence="1">
    <location>
        <position position="897"/>
    </location>
    <ligand>
        <name>Zn(2+)</name>
        <dbReference type="ChEBI" id="CHEBI:29105"/>
    </ligand>
</feature>
<name>SECA_ECO81</name>
<comment type="function">
    <text evidence="1">Part of the Sec protein translocase complex. Interacts with the SecYEG preprotein conducting channel. Has a central role in coupling the hydrolysis of ATP to the transfer of proteins into and across the cell membrane, serving both as a receptor for the preprotein-SecB complex and as an ATP-driven molecular motor driving the stepwise translocation of polypeptide chains across the membrane.</text>
</comment>
<comment type="catalytic activity">
    <reaction evidence="1">
        <text>ATP + H2O + cellular proteinSide 1 = ADP + phosphate + cellular proteinSide 2.</text>
        <dbReference type="EC" id="7.4.2.8"/>
    </reaction>
</comment>
<comment type="cofactor">
    <cofactor evidence="1">
        <name>Zn(2+)</name>
        <dbReference type="ChEBI" id="CHEBI:29105"/>
    </cofactor>
    <text evidence="1">May bind 1 zinc ion per subunit.</text>
</comment>
<comment type="subunit">
    <text evidence="1">Monomer and homodimer. Part of the essential Sec protein translocation apparatus which comprises SecA, SecYEG and auxiliary proteins SecDF-YajC and YidC.</text>
</comment>
<comment type="subcellular location">
    <subcellularLocation>
        <location evidence="1">Cell inner membrane</location>
        <topology evidence="1">Peripheral membrane protein</topology>
        <orientation evidence="1">Cytoplasmic side</orientation>
    </subcellularLocation>
    <subcellularLocation>
        <location evidence="1">Cytoplasm</location>
    </subcellularLocation>
    <text evidence="1">Distribution is 50-50.</text>
</comment>
<comment type="induction">
    <text evidence="1">Repressed under conditions of excess protein secretion capacity and derepressed when protein secretion becomes limiting. This is regulated by SecM.</text>
</comment>
<comment type="similarity">
    <text evidence="1">Belongs to the SecA family.</text>
</comment>
<sequence>MLIKLLTKVFGSRNDRTLRRMRKVVNIINAMEPEMEKLSDEELKGKTAEFRARLEKGEVLENLIPEAFAVVREASKRVFGMRHFDVQLLGGMVLNERCIAEMRTGEGKTLTATLPAYLNALTGKGVHVVTVNDYLAQRDAENNRPLFEFLGLTVGINLPGMPAPAKREAYAADITYGTNNEYGFDYLRDNMAFSPEERVQRKLHYALVDEVDSILIDEARTPLIISGPAEDSSEMYKRVNKIIPHLIRQEKEDSETFQGEGHFSVDEKSRQVNLTERGLVLIEELLVKEGIMDEGESLYSPANIMLMHHVTAALRAHALFTRDVDYIVKDGEVIIVDEHTGRTMQGRRWSDGLHQAVEAKEGVQIQNENQTLASITFQNYFRLYEKLAGMTGTADTEAFEFSSIYKLDTVVVPTNRPMIRKDLPDLVYMTEAEKIQAIIEDIKERTAKGQPVLVGTISIEKSELVSNELTKAGIKHNVLNAKFHANEAAIVAQAGYPAAVTIATNMAGRGTDIVLGGSWQAEVAALENPTAEQIEKIKADWQVRHDAVLAAGGLHIIGTERHESRRIDNQLRGRSGRQGDAGSSRFYLSMEDALMRIFASDRVSGMMRKLGMKPGEAIEHPWVTKAIANAQRKVESRNFDIRKQLLEYDDVANDQRRAIYSQRNELLDVSDVSETINSIREDVFKATIDAYIPPQSLEEMWDIPGLQERLKNDFDLDLPIAEWLDKEPELHEETLRERILAQSIEVYQRKEEVVGAEMMRHFEKGVMLQTLDSLWKEHLAAMDYLRQGIHLRGYAQKDPKQEYKRESFSMFAAMLESLKYEVISTLSKVQVRMPEEVEELEQQRRMEAERLAQMQQLSHQDDDSAAAAALAAQTGERKVGRNDPCPCGSGKKYKQCHGRLQ</sequence>